<evidence type="ECO:0000250" key="1"/>
<evidence type="ECO:0000255" key="2"/>
<evidence type="ECO:0000256" key="3">
    <source>
        <dbReference type="SAM" id="MobiDB-lite"/>
    </source>
</evidence>
<evidence type="ECO:0000305" key="4"/>
<reference key="1">
    <citation type="journal article" date="2008" name="Nat. Biotechnol.">
        <title>Genome sequencing and analysis of the filamentous fungus Penicillium chrysogenum.</title>
        <authorList>
            <person name="van den Berg M.A."/>
            <person name="Albang R."/>
            <person name="Albermann K."/>
            <person name="Badger J.H."/>
            <person name="Daran J.-M."/>
            <person name="Driessen A.J.M."/>
            <person name="Garcia-Estrada C."/>
            <person name="Fedorova N.D."/>
            <person name="Harris D.M."/>
            <person name="Heijne W.H.M."/>
            <person name="Joardar V.S."/>
            <person name="Kiel J.A.K.W."/>
            <person name="Kovalchuk A."/>
            <person name="Martin J.F."/>
            <person name="Nierman W.C."/>
            <person name="Nijland J.G."/>
            <person name="Pronk J.T."/>
            <person name="Roubos J.A."/>
            <person name="van der Klei I.J."/>
            <person name="van Peij N.N.M.E."/>
            <person name="Veenhuis M."/>
            <person name="von Doehren H."/>
            <person name="Wagner C."/>
            <person name="Wortman J.R."/>
            <person name="Bovenberg R.A.L."/>
        </authorList>
    </citation>
    <scope>NUCLEOTIDE SEQUENCE [LARGE SCALE GENOMIC DNA]</scope>
    <source>
        <strain>ATCC 28089 / DSM 1075 / NRRL 1951 / Wisconsin 54-1255</strain>
    </source>
</reference>
<protein>
    <recommendedName>
        <fullName>ATPase synthesis protein 25, mitochondrial</fullName>
    </recommendedName>
</protein>
<sequence length="692" mass="75902">MSRALLRGAACQGCRHEVLRSFVSVSGIPMPRSSPLSSRSISNSRAFSAVTVLRSDRPPSSNQIDRHLSESQEPPAHSEANTPASSQHVPWYLQEEAPIVKDRPLTEAHLPQIPDDSPEMLSTLLEYTYKDLGLDHLKLFDLRGLEIPAALGANVIMIIGTARSVKHLNVSADRLCRWLRSQYKLSPYADGLLGRNELKIKLRRKAKRARAASAAGAMVDEKDDGITTGWICVNAGMVDKGATTTQLSDVGIEGFGNLDLGTSVVVQIFTEEKRADVDLDGLWEATLAREGRKDIRESTEDLSKTGAGPPRSTSDGFGSIPGQKRGFHTMRRLALSAMNSAEPGLEAGFPGVGASSSALPGDAAEVASQLTPTSLLQILAELPADSARNELGSGPNDRQSTLFLRLFYTNHAARFSAQEKAIFRLKLFSIAVSRQHPAYTKDTLFSTFSDFLRDGYDLPDDLGFDVVSALLTPRTAGVVTEQSETHSSEADMELALLVLDRLSLRGVPILNMRIFNILYQAVCAPKTAPSKPTESRPEEGSPSWSVVQQTESQKQTLSRLSKILAAANIPFDAVDARQLMVTLFQCGDYDGFWRLWRQFPLKGVNRTQEDYVQLFKLHAELGEEVRARECLSTGVPLMNQESPAIVLQGPIVTAIMHCILVADPTLQDRDEESPSFYMPLWTECQEALAREN</sequence>
<accession>B6HIP5</accession>
<keyword id="KW-0472">Membrane</keyword>
<keyword id="KW-0496">Mitochondrion</keyword>
<keyword id="KW-0999">Mitochondrion inner membrane</keyword>
<keyword id="KW-1185">Reference proteome</keyword>
<keyword id="KW-0809">Transit peptide</keyword>
<feature type="transit peptide" description="Mitochondrion" evidence="2">
    <location>
        <begin position="1"/>
        <end position="48"/>
    </location>
</feature>
<feature type="chain" id="PRO_0000404481" description="ATPase synthesis protein 25, mitochondrial">
    <location>
        <begin position="49"/>
        <end position="692"/>
    </location>
</feature>
<feature type="region of interest" description="Disordered" evidence="3">
    <location>
        <begin position="52"/>
        <end position="86"/>
    </location>
</feature>
<feature type="region of interest" description="Disordered" evidence="3">
    <location>
        <begin position="293"/>
        <end position="322"/>
    </location>
</feature>
<feature type="region of interest" description="Disordered" evidence="3">
    <location>
        <begin position="528"/>
        <end position="548"/>
    </location>
</feature>
<feature type="compositionally biased region" description="Basic and acidic residues" evidence="3">
    <location>
        <begin position="293"/>
        <end position="303"/>
    </location>
</feature>
<dbReference type="EMBL" id="AM920436">
    <property type="protein sequence ID" value="CAP96809.1"/>
    <property type="molecule type" value="Genomic_DNA"/>
</dbReference>
<dbReference type="RefSeq" id="XP_002568903.1">
    <property type="nucleotide sequence ID" value="XM_002568857.1"/>
</dbReference>
<dbReference type="SMR" id="B6HIP5"/>
<dbReference type="STRING" id="500485.B6HIP5"/>
<dbReference type="GeneID" id="8316661"/>
<dbReference type="KEGG" id="pcs:N7525_006630"/>
<dbReference type="VEuPathDB" id="FungiDB:PCH_Pc21g19120"/>
<dbReference type="eggNOG" id="ENOG502S5IB">
    <property type="taxonomic scope" value="Eukaryota"/>
</dbReference>
<dbReference type="HOGENOM" id="CLU_016140_0_0_1"/>
<dbReference type="OMA" id="CLSSWVP"/>
<dbReference type="OrthoDB" id="107372at2759"/>
<dbReference type="BioCyc" id="PCHR:PC21G19120-MONOMER"/>
<dbReference type="Proteomes" id="UP000000724">
    <property type="component" value="Contig Pc00c21"/>
</dbReference>
<dbReference type="GO" id="GO:0005743">
    <property type="term" value="C:mitochondrial inner membrane"/>
    <property type="evidence" value="ECO:0007669"/>
    <property type="project" value="UniProtKB-SubCell"/>
</dbReference>
<dbReference type="GO" id="GO:0140053">
    <property type="term" value="P:mitochondrial gene expression"/>
    <property type="evidence" value="ECO:0007669"/>
    <property type="project" value="InterPro"/>
</dbReference>
<dbReference type="GO" id="GO:0048255">
    <property type="term" value="P:mRNA stabilization"/>
    <property type="evidence" value="ECO:0007669"/>
    <property type="project" value="TreeGrafter"/>
</dbReference>
<dbReference type="FunFam" id="3.30.460.10:FF:000044">
    <property type="entry name" value="ATPase synthesis protein 25, mitochondrial"/>
    <property type="match status" value="1"/>
</dbReference>
<dbReference type="Gene3D" id="3.30.460.10">
    <property type="entry name" value="Beta Polymerase, domain 2"/>
    <property type="match status" value="1"/>
</dbReference>
<dbReference type="InterPro" id="IPR040152">
    <property type="entry name" value="Atp25"/>
</dbReference>
<dbReference type="InterPro" id="IPR043519">
    <property type="entry name" value="NT_sf"/>
</dbReference>
<dbReference type="PANTHER" id="PTHR28087">
    <property type="entry name" value="ATPASE SYNTHESIS PROTEIN 25, MITOCHONDRIAL"/>
    <property type="match status" value="1"/>
</dbReference>
<dbReference type="PANTHER" id="PTHR28087:SF1">
    <property type="entry name" value="ATPASE SYNTHESIS PROTEIN 25, MITOCHONDRIAL"/>
    <property type="match status" value="1"/>
</dbReference>
<dbReference type="Pfam" id="PF02410">
    <property type="entry name" value="RsfS"/>
    <property type="match status" value="1"/>
</dbReference>
<gene>
    <name type="primary">atp25</name>
    <name type="ORF">Pc21g19120</name>
</gene>
<comment type="function">
    <text evidence="1">Probable mitochondrial mRNA stabilization factor.</text>
</comment>
<comment type="subcellular location">
    <subcellularLocation>
        <location evidence="1">Mitochondrion inner membrane</location>
        <topology evidence="1">Peripheral membrane protein</topology>
        <orientation evidence="1">Matrix side</orientation>
    </subcellularLocation>
</comment>
<comment type="similarity">
    <text evidence="4">Belongs to the ATP25 family.</text>
</comment>
<name>ATP25_PENRW</name>
<proteinExistence type="inferred from homology"/>
<organism>
    <name type="scientific">Penicillium rubens (strain ATCC 28089 / DSM 1075 / NRRL 1951 / Wisconsin 54-1255)</name>
    <name type="common">Penicillium chrysogenum</name>
    <dbReference type="NCBI Taxonomy" id="500485"/>
    <lineage>
        <taxon>Eukaryota</taxon>
        <taxon>Fungi</taxon>
        <taxon>Dikarya</taxon>
        <taxon>Ascomycota</taxon>
        <taxon>Pezizomycotina</taxon>
        <taxon>Eurotiomycetes</taxon>
        <taxon>Eurotiomycetidae</taxon>
        <taxon>Eurotiales</taxon>
        <taxon>Aspergillaceae</taxon>
        <taxon>Penicillium</taxon>
        <taxon>Penicillium chrysogenum species complex</taxon>
    </lineage>
</organism>